<name>FB304_ARATH</name>
<gene>
    <name type="ordered locus">At3g54460</name>
    <name type="ORF">T14E10.30</name>
</gene>
<sequence>MADDHKLCGFLCTVLSVDSPDLLQSGSSCFIFNDGSVTGFKSENGLILSLTNPISNLQSLISSKGDHDVENSGTIEDGRLETPQKRRKCVEGESSGKRKTPKSKRRVLSGSKEKTVQGRKRVKSIGMVNGSISVVQQLHALVANKCLKIICRVVKVDKGENGEERAVVLVDVYLPIELWSGWQFPKSQATAAALFKHLSCDWGLRVSILDGKSIWEEANGRIKAIWDLSDCHVFDCKLLCNAPNSPKRRLFKLHEIFKSLPSPGNHDVSYSSRVLPSTDSCVSGVWDLSDDVLISILMKLDTKDLFSIAAVCRLFRSLTSLIVPCMNLKLFPHQQAAVGWMLERERKAEVSSHPLYLSFDTEDGFSFYVNAVTGDIITEAAPMVKDFRGGMFCDEPGLGKTITALSLILKTQGTMADPPEGLPIVWCTHKSDKKCAYYEYTSDQFTSNSMSAVKRFQSPSSCRNQVSFEAFRPLLESKSLPFKQARLMDPDDQTLESKNSNFENEFETHIPASLDLKAQCRKSLGNVRKNLLPAYNGASELSEVMEAKRISNWKKCGMITGCKRKGLTDSDVESDIWMQCDSCSKWRRIIDEGVSVTGSAWFCSNNNDPAYQSCNDPEELWDKSQPIKYLQGFYTKGASGEESDNISFFTSVLREHKSSVSSTVKKALIWLAKLPLEKLSQMETVGLPGPVLGLKLDALGFQRIFRAFGLKSRVEKGVTKWFYPKFLENLVFDVPALKVALCQPLDTFRLYLSKATLIVVPTNLVNHWLTQIQKHVCSDQLRILVWADHIELSPHSLAWDYDVVITTFSRLSAEWNPRKKSPLIQVHWLRVMLDEGHTLGSSVSLTNKFQMAVSLTACNRWLLTGTPTPNTPNSQLSHIQPLLKFLHEEVYGENPKFWEAGILRPFEAEMEEGRLRLLQLLQRCMISSRKKDLQMIPPCIKKVTYLNFLPGHARSYNELVETVRRNILLADWNDPSHVESLLNSKQWKFRSITISNVRLSCCVAGHIKMTDAGHDIKETMDALLENDLDLWTEEYSFIQDSLIGGCNCKRCGEWCRLPVITPCRHLLCLDCVALDSERCTISGCGYLYEMQTPETLARPENPNPKWPVPKDLIELQPSYKQDDWNPDWQSTSSSKVSYLVDRLRKLHEGNKKSILSFNKTDNDNLEDNPPGTSEAFLGKELHGQDCGSQMVFVDKVLIFSQFLEHIHVIEQQLTTAGIKFGKMYSPMQSYNKMKALAMFQNDADCMALLMDGSGALGLDLSFVTHVFLMEPIWDKSLEEQVISRAHRMGAKRPIFVETLTMRGTIEEQMMRFLEDAEKSDRLLSGDYIEAKQETTRSRRTLHDLVESNYLSHLSFVRSDGKMEFAASQLAGLKDHQLA</sequence>
<reference key="1">
    <citation type="journal article" date="2000" name="Nature">
        <title>Sequence and analysis of chromosome 3 of the plant Arabidopsis thaliana.</title>
        <authorList>
            <person name="Salanoubat M."/>
            <person name="Lemcke K."/>
            <person name="Rieger M."/>
            <person name="Ansorge W."/>
            <person name="Unseld M."/>
            <person name="Fartmann B."/>
            <person name="Valle G."/>
            <person name="Bloecker H."/>
            <person name="Perez-Alonso M."/>
            <person name="Obermaier B."/>
            <person name="Delseny M."/>
            <person name="Boutry M."/>
            <person name="Grivell L.A."/>
            <person name="Mache R."/>
            <person name="Puigdomenech P."/>
            <person name="De Simone V."/>
            <person name="Choisne N."/>
            <person name="Artiguenave F."/>
            <person name="Robert C."/>
            <person name="Brottier P."/>
            <person name="Wincker P."/>
            <person name="Cattolico L."/>
            <person name="Weissenbach J."/>
            <person name="Saurin W."/>
            <person name="Quetier F."/>
            <person name="Schaefer M."/>
            <person name="Mueller-Auer S."/>
            <person name="Gabel C."/>
            <person name="Fuchs M."/>
            <person name="Benes V."/>
            <person name="Wurmbach E."/>
            <person name="Drzonek H."/>
            <person name="Erfle H."/>
            <person name="Jordan N."/>
            <person name="Bangert S."/>
            <person name="Wiedelmann R."/>
            <person name="Kranz H."/>
            <person name="Voss H."/>
            <person name="Holland R."/>
            <person name="Brandt P."/>
            <person name="Nyakatura G."/>
            <person name="Vezzi A."/>
            <person name="D'Angelo M."/>
            <person name="Pallavicini A."/>
            <person name="Toppo S."/>
            <person name="Simionati B."/>
            <person name="Conrad A."/>
            <person name="Hornischer K."/>
            <person name="Kauer G."/>
            <person name="Loehnert T.-H."/>
            <person name="Nordsiek G."/>
            <person name="Reichelt J."/>
            <person name="Scharfe M."/>
            <person name="Schoen O."/>
            <person name="Bargues M."/>
            <person name="Terol J."/>
            <person name="Climent J."/>
            <person name="Navarro P."/>
            <person name="Collado C."/>
            <person name="Perez-Perez A."/>
            <person name="Ottenwaelder B."/>
            <person name="Duchemin D."/>
            <person name="Cooke R."/>
            <person name="Laudie M."/>
            <person name="Berger-Llauro C."/>
            <person name="Purnelle B."/>
            <person name="Masuy D."/>
            <person name="de Haan M."/>
            <person name="Maarse A.C."/>
            <person name="Alcaraz J.-P."/>
            <person name="Cottet A."/>
            <person name="Casacuberta E."/>
            <person name="Monfort A."/>
            <person name="Argiriou A."/>
            <person name="Flores M."/>
            <person name="Liguori R."/>
            <person name="Vitale D."/>
            <person name="Mannhaupt G."/>
            <person name="Haase D."/>
            <person name="Schoof H."/>
            <person name="Rudd S."/>
            <person name="Zaccaria P."/>
            <person name="Mewes H.-W."/>
            <person name="Mayer K.F.X."/>
            <person name="Kaul S."/>
            <person name="Town C.D."/>
            <person name="Koo H.L."/>
            <person name="Tallon L.J."/>
            <person name="Jenkins J."/>
            <person name="Rooney T."/>
            <person name="Rizzo M."/>
            <person name="Walts A."/>
            <person name="Utterback T."/>
            <person name="Fujii C.Y."/>
            <person name="Shea T.P."/>
            <person name="Creasy T.H."/>
            <person name="Haas B."/>
            <person name="Maiti R."/>
            <person name="Wu D."/>
            <person name="Peterson J."/>
            <person name="Van Aken S."/>
            <person name="Pai G."/>
            <person name="Militscher J."/>
            <person name="Sellers P."/>
            <person name="Gill J.E."/>
            <person name="Feldblyum T.V."/>
            <person name="Preuss D."/>
            <person name="Lin X."/>
            <person name="Nierman W.C."/>
            <person name="Salzberg S.L."/>
            <person name="White O."/>
            <person name="Venter J.C."/>
            <person name="Fraser C.M."/>
            <person name="Kaneko T."/>
            <person name="Nakamura Y."/>
            <person name="Sato S."/>
            <person name="Kato T."/>
            <person name="Asamizu E."/>
            <person name="Sasamoto S."/>
            <person name="Kimura T."/>
            <person name="Idesawa K."/>
            <person name="Kawashima K."/>
            <person name="Kishida Y."/>
            <person name="Kiyokawa C."/>
            <person name="Kohara M."/>
            <person name="Matsumoto M."/>
            <person name="Matsuno A."/>
            <person name="Muraki A."/>
            <person name="Nakayama S."/>
            <person name="Nakazaki N."/>
            <person name="Shinpo S."/>
            <person name="Takeuchi C."/>
            <person name="Wada T."/>
            <person name="Watanabe A."/>
            <person name="Yamada M."/>
            <person name="Yasuda M."/>
            <person name="Tabata S."/>
        </authorList>
    </citation>
    <scope>NUCLEOTIDE SEQUENCE [LARGE SCALE GENOMIC DNA]</scope>
    <source>
        <strain>cv. Columbia</strain>
    </source>
</reference>
<reference key="2">
    <citation type="journal article" date="2017" name="Plant J.">
        <title>Araport11: a complete reannotation of the Arabidopsis thaliana reference genome.</title>
        <authorList>
            <person name="Cheng C.Y."/>
            <person name="Krishnakumar V."/>
            <person name="Chan A.P."/>
            <person name="Thibaud-Nissen F."/>
            <person name="Schobel S."/>
            <person name="Town C.D."/>
        </authorList>
    </citation>
    <scope>GENOME REANNOTATION</scope>
    <source>
        <strain>cv. Columbia</strain>
    </source>
</reference>
<reference key="3">
    <citation type="journal article" date="2003" name="Science">
        <title>Empirical analysis of transcriptional activity in the Arabidopsis genome.</title>
        <authorList>
            <person name="Yamada K."/>
            <person name="Lim J."/>
            <person name="Dale J.M."/>
            <person name="Chen H."/>
            <person name="Shinn P."/>
            <person name="Palm C.J."/>
            <person name="Southwick A.M."/>
            <person name="Wu H.C."/>
            <person name="Kim C.J."/>
            <person name="Nguyen M."/>
            <person name="Pham P.K."/>
            <person name="Cheuk R.F."/>
            <person name="Karlin-Newmann G."/>
            <person name="Liu S.X."/>
            <person name="Lam B."/>
            <person name="Sakano H."/>
            <person name="Wu T."/>
            <person name="Yu G."/>
            <person name="Miranda M."/>
            <person name="Quach H.L."/>
            <person name="Tripp M."/>
            <person name="Chang C.H."/>
            <person name="Lee J.M."/>
            <person name="Toriumi M.J."/>
            <person name="Chan M.M."/>
            <person name="Tang C.C."/>
            <person name="Onodera C.S."/>
            <person name="Deng J.M."/>
            <person name="Akiyama K."/>
            <person name="Ansari Y."/>
            <person name="Arakawa T."/>
            <person name="Banh J."/>
            <person name="Banno F."/>
            <person name="Bowser L."/>
            <person name="Brooks S.Y."/>
            <person name="Carninci P."/>
            <person name="Chao Q."/>
            <person name="Choy N."/>
            <person name="Enju A."/>
            <person name="Goldsmith A.D."/>
            <person name="Gurjal M."/>
            <person name="Hansen N.F."/>
            <person name="Hayashizaki Y."/>
            <person name="Johnson-Hopson C."/>
            <person name="Hsuan V.W."/>
            <person name="Iida K."/>
            <person name="Karnes M."/>
            <person name="Khan S."/>
            <person name="Koesema E."/>
            <person name="Ishida J."/>
            <person name="Jiang P.X."/>
            <person name="Jones T."/>
            <person name="Kawai J."/>
            <person name="Kamiya A."/>
            <person name="Meyers C."/>
            <person name="Nakajima M."/>
            <person name="Narusaka M."/>
            <person name="Seki M."/>
            <person name="Sakurai T."/>
            <person name="Satou M."/>
            <person name="Tamse R."/>
            <person name="Vaysberg M."/>
            <person name="Wallender E.K."/>
            <person name="Wong C."/>
            <person name="Yamamura Y."/>
            <person name="Yuan S."/>
            <person name="Shinozaki K."/>
            <person name="Davis R.W."/>
            <person name="Theologis A."/>
            <person name="Ecker J.R."/>
        </authorList>
    </citation>
    <scope>NUCLEOTIDE SEQUENCE [LARGE SCALE MRNA]</scope>
    <source>
        <strain>cv. Columbia</strain>
    </source>
</reference>
<reference key="4">
    <citation type="submission" date="2006-07" db="EMBL/GenBank/DDBJ databases">
        <title>Large-scale analysis of RIKEN Arabidopsis full-length (RAFL) cDNAs.</title>
        <authorList>
            <person name="Totoki Y."/>
            <person name="Seki M."/>
            <person name="Ishida J."/>
            <person name="Nakajima M."/>
            <person name="Enju A."/>
            <person name="Kamiya A."/>
            <person name="Narusaka M."/>
            <person name="Shin-i T."/>
            <person name="Nakagawa M."/>
            <person name="Sakamoto N."/>
            <person name="Oishi K."/>
            <person name="Kohara Y."/>
            <person name="Kobayashi M."/>
            <person name="Toyoda A."/>
            <person name="Sakaki Y."/>
            <person name="Sakurai T."/>
            <person name="Iida K."/>
            <person name="Akiyama K."/>
            <person name="Satou M."/>
            <person name="Toyoda T."/>
            <person name="Konagaya A."/>
            <person name="Carninci P."/>
            <person name="Kawai J."/>
            <person name="Hayashizaki Y."/>
            <person name="Shinozaki K."/>
        </authorList>
    </citation>
    <scope>NUCLEOTIDE SEQUENCE [LARGE SCALE MRNA]</scope>
    <source>
        <strain>cv. Columbia</strain>
    </source>
</reference>
<reference key="5">
    <citation type="journal article" date="2013" name="PLoS ONE">
        <title>Genome-wide comparative in silico analysis of the RNA helicase gene family in Zea mays and Glycine max: a comparison with Arabidopsis and Oryza sativa.</title>
        <authorList>
            <person name="Xu R."/>
            <person name="Zhang S."/>
            <person name="Huang J."/>
            <person name="Zheng C."/>
        </authorList>
    </citation>
    <scope>GENE FAMILY</scope>
</reference>
<evidence type="ECO:0000255" key="1">
    <source>
        <dbReference type="PROSITE-ProRule" id="PRU00080"/>
    </source>
</evidence>
<evidence type="ECO:0000255" key="2">
    <source>
        <dbReference type="PROSITE-ProRule" id="PRU00454"/>
    </source>
</evidence>
<evidence type="ECO:0000255" key="3">
    <source>
        <dbReference type="PROSITE-ProRule" id="PRU00541"/>
    </source>
</evidence>
<evidence type="ECO:0000255" key="4">
    <source>
        <dbReference type="PROSITE-ProRule" id="PRU00542"/>
    </source>
</evidence>
<evidence type="ECO:0000256" key="5">
    <source>
        <dbReference type="SAM" id="MobiDB-lite"/>
    </source>
</evidence>
<evidence type="ECO:0000305" key="6"/>
<keyword id="KW-0067">ATP-binding</keyword>
<keyword id="KW-0347">Helicase</keyword>
<keyword id="KW-0378">Hydrolase</keyword>
<keyword id="KW-0479">Metal-binding</keyword>
<keyword id="KW-0547">Nucleotide-binding</keyword>
<keyword id="KW-1185">Reference proteome</keyword>
<keyword id="KW-0862">Zinc</keyword>
<keyword id="KW-0863">Zinc-finger</keyword>
<organism>
    <name type="scientific">Arabidopsis thaliana</name>
    <name type="common">Mouse-ear cress</name>
    <dbReference type="NCBI Taxonomy" id="3702"/>
    <lineage>
        <taxon>Eukaryota</taxon>
        <taxon>Viridiplantae</taxon>
        <taxon>Streptophyta</taxon>
        <taxon>Embryophyta</taxon>
        <taxon>Tracheophyta</taxon>
        <taxon>Spermatophyta</taxon>
        <taxon>Magnoliopsida</taxon>
        <taxon>eudicotyledons</taxon>
        <taxon>Gunneridae</taxon>
        <taxon>Pentapetalae</taxon>
        <taxon>rosids</taxon>
        <taxon>malvids</taxon>
        <taxon>Brassicales</taxon>
        <taxon>Brassicaceae</taxon>
        <taxon>Camelineae</taxon>
        <taxon>Arabidopsis</taxon>
    </lineage>
</organism>
<feature type="chain" id="PRO_0000283570" description="F-box protein At3g54460">
    <location>
        <begin position="1"/>
        <end position="1378"/>
    </location>
</feature>
<feature type="domain" description="F-box" evidence="1">
    <location>
        <begin position="282"/>
        <end position="328"/>
    </location>
</feature>
<feature type="domain" description="Helicase ATP-binding" evidence="3">
    <location>
        <begin position="720"/>
        <end position="885"/>
    </location>
</feature>
<feature type="domain" description="Helicase C-terminal" evidence="4">
    <location>
        <begin position="1185"/>
        <end position="1324"/>
    </location>
</feature>
<feature type="zinc finger region" description="CW-type" evidence="2">
    <location>
        <begin position="571"/>
        <end position="622"/>
    </location>
</feature>
<feature type="region of interest" description="Disordered" evidence="5">
    <location>
        <begin position="65"/>
        <end position="113"/>
    </location>
</feature>
<feature type="short sequence motif" description="DEAH box" evidence="3">
    <location>
        <begin position="834"/>
        <end position="837"/>
    </location>
</feature>
<feature type="compositionally biased region" description="Basic and acidic residues" evidence="5">
    <location>
        <begin position="65"/>
        <end position="96"/>
    </location>
</feature>
<feature type="compositionally biased region" description="Basic residues" evidence="5">
    <location>
        <begin position="97"/>
        <end position="107"/>
    </location>
</feature>
<feature type="binding site" evidence="2">
    <location>
        <position position="580"/>
    </location>
    <ligand>
        <name>Zn(2+)</name>
        <dbReference type="ChEBI" id="CHEBI:29105"/>
    </ligand>
</feature>
<feature type="binding site" evidence="2">
    <location>
        <position position="583"/>
    </location>
    <ligand>
        <name>Zn(2+)</name>
        <dbReference type="ChEBI" id="CHEBI:29105"/>
    </ligand>
</feature>
<feature type="binding site" evidence="2">
    <location>
        <position position="603"/>
    </location>
    <ligand>
        <name>Zn(2+)</name>
        <dbReference type="ChEBI" id="CHEBI:29105"/>
    </ligand>
</feature>
<feature type="binding site" evidence="2">
    <location>
        <position position="614"/>
    </location>
    <ligand>
        <name>Zn(2+)</name>
        <dbReference type="ChEBI" id="CHEBI:29105"/>
    </ligand>
</feature>
<feature type="binding site" evidence="3">
    <location>
        <begin position="733"/>
        <end position="740"/>
    </location>
    <ligand>
        <name>ATP</name>
        <dbReference type="ChEBI" id="CHEBI:30616"/>
    </ligand>
</feature>
<proteinExistence type="evidence at transcript level"/>
<dbReference type="EMBL" id="AL138656">
    <property type="protein sequence ID" value="CAB77566.1"/>
    <property type="molecule type" value="Genomic_DNA"/>
</dbReference>
<dbReference type="EMBL" id="CP002686">
    <property type="protein sequence ID" value="AEE79234.1"/>
    <property type="molecule type" value="Genomic_DNA"/>
</dbReference>
<dbReference type="EMBL" id="AY091046">
    <property type="protein sequence ID" value="AAM13867.1"/>
    <property type="molecule type" value="mRNA"/>
</dbReference>
<dbReference type="EMBL" id="BT004336">
    <property type="protein sequence ID" value="AAO42330.1"/>
    <property type="molecule type" value="mRNA"/>
</dbReference>
<dbReference type="EMBL" id="AK221681">
    <property type="protein sequence ID" value="BAD95377.1"/>
    <property type="molecule type" value="mRNA"/>
</dbReference>
<dbReference type="EMBL" id="AK227150">
    <property type="protein sequence ID" value="BAE99194.1"/>
    <property type="molecule type" value="mRNA"/>
</dbReference>
<dbReference type="PIR" id="T47605">
    <property type="entry name" value="T47605"/>
</dbReference>
<dbReference type="RefSeq" id="NP_680129.1">
    <property type="nucleotide sequence ID" value="NM_148874.5"/>
</dbReference>
<dbReference type="BioGRID" id="9927">
    <property type="interactions" value="1"/>
</dbReference>
<dbReference type="FunCoup" id="Q9M1I1">
    <property type="interactions" value="88"/>
</dbReference>
<dbReference type="STRING" id="3702.Q9M1I1"/>
<dbReference type="iPTMnet" id="Q9M1I1"/>
<dbReference type="MetOSite" id="Q9M1I1"/>
<dbReference type="PaxDb" id="3702-AT3G54460.1"/>
<dbReference type="ProteomicsDB" id="230080"/>
<dbReference type="EnsemblPlants" id="AT3G54460.1">
    <property type="protein sequence ID" value="AT3G54460.1"/>
    <property type="gene ID" value="AT3G54460"/>
</dbReference>
<dbReference type="GeneID" id="824611"/>
<dbReference type="Gramene" id="AT3G54460.1">
    <property type="protein sequence ID" value="AT3G54460.1"/>
    <property type="gene ID" value="AT3G54460"/>
</dbReference>
<dbReference type="KEGG" id="ath:AT3G54460"/>
<dbReference type="Araport" id="AT3G54460"/>
<dbReference type="TAIR" id="AT3G54460"/>
<dbReference type="eggNOG" id="KOG0298">
    <property type="taxonomic scope" value="Eukaryota"/>
</dbReference>
<dbReference type="eggNOG" id="KOG1001">
    <property type="taxonomic scope" value="Eukaryota"/>
</dbReference>
<dbReference type="HOGENOM" id="CLU_006077_0_0_1"/>
<dbReference type="InParanoid" id="Q9M1I1"/>
<dbReference type="PhylomeDB" id="Q9M1I1"/>
<dbReference type="PRO" id="PR:Q9M1I1"/>
<dbReference type="Proteomes" id="UP000006548">
    <property type="component" value="Chromosome 3"/>
</dbReference>
<dbReference type="ExpressionAtlas" id="Q9M1I1">
    <property type="expression patterns" value="baseline and differential"/>
</dbReference>
<dbReference type="GO" id="GO:0009506">
    <property type="term" value="C:plasmodesma"/>
    <property type="evidence" value="ECO:0007005"/>
    <property type="project" value="TAIR"/>
</dbReference>
<dbReference type="GO" id="GO:0005524">
    <property type="term" value="F:ATP binding"/>
    <property type="evidence" value="ECO:0007669"/>
    <property type="project" value="UniProtKB-KW"/>
</dbReference>
<dbReference type="GO" id="GO:0004386">
    <property type="term" value="F:helicase activity"/>
    <property type="evidence" value="ECO:0007669"/>
    <property type="project" value="UniProtKB-KW"/>
</dbReference>
<dbReference type="GO" id="GO:0016787">
    <property type="term" value="F:hydrolase activity"/>
    <property type="evidence" value="ECO:0007669"/>
    <property type="project" value="UniProtKB-KW"/>
</dbReference>
<dbReference type="GO" id="GO:0008270">
    <property type="term" value="F:zinc ion binding"/>
    <property type="evidence" value="ECO:0007669"/>
    <property type="project" value="UniProtKB-KW"/>
</dbReference>
<dbReference type="CDD" id="cd18008">
    <property type="entry name" value="DEXDc_SHPRH-like"/>
    <property type="match status" value="1"/>
</dbReference>
<dbReference type="CDD" id="cd09917">
    <property type="entry name" value="F-box_SF"/>
    <property type="match status" value="1"/>
</dbReference>
<dbReference type="CDD" id="cd18793">
    <property type="entry name" value="SF2_C_SNF"/>
    <property type="match status" value="1"/>
</dbReference>
<dbReference type="FunFam" id="3.40.50.300:FF:004582">
    <property type="entry name" value="SNF2 domain-containing protein"/>
    <property type="match status" value="1"/>
</dbReference>
<dbReference type="Gene3D" id="1.20.1280.50">
    <property type="match status" value="1"/>
</dbReference>
<dbReference type="Gene3D" id="3.30.40.100">
    <property type="match status" value="1"/>
</dbReference>
<dbReference type="Gene3D" id="3.40.50.300">
    <property type="entry name" value="P-loop containing nucleotide triphosphate hydrolases"/>
    <property type="match status" value="1"/>
</dbReference>
<dbReference type="Gene3D" id="3.40.50.10810">
    <property type="entry name" value="Tandem AAA-ATPase domain"/>
    <property type="match status" value="1"/>
</dbReference>
<dbReference type="InterPro" id="IPR036047">
    <property type="entry name" value="F-box-like_dom_sf"/>
</dbReference>
<dbReference type="InterPro" id="IPR001810">
    <property type="entry name" value="F-box_dom"/>
</dbReference>
<dbReference type="InterPro" id="IPR014001">
    <property type="entry name" value="Helicase_ATP-bd"/>
</dbReference>
<dbReference type="InterPro" id="IPR001650">
    <property type="entry name" value="Helicase_C-like"/>
</dbReference>
<dbReference type="InterPro" id="IPR027417">
    <property type="entry name" value="P-loop_NTPase"/>
</dbReference>
<dbReference type="InterPro" id="IPR038718">
    <property type="entry name" value="SNF2-like_sf"/>
</dbReference>
<dbReference type="InterPro" id="IPR049730">
    <property type="entry name" value="SNF2/RAD54-like_C"/>
</dbReference>
<dbReference type="InterPro" id="IPR000330">
    <property type="entry name" value="SNF2_N"/>
</dbReference>
<dbReference type="InterPro" id="IPR050628">
    <property type="entry name" value="SNF2_RAD54_helicase_TF"/>
</dbReference>
<dbReference type="InterPro" id="IPR011124">
    <property type="entry name" value="Znf_CW"/>
</dbReference>
<dbReference type="InterPro" id="IPR017907">
    <property type="entry name" value="Znf_RING_CS"/>
</dbReference>
<dbReference type="PANTHER" id="PTHR45626:SF14">
    <property type="entry name" value="ATP-DEPENDENT DNA HELICASE (EUROFUNG)"/>
    <property type="match status" value="1"/>
</dbReference>
<dbReference type="PANTHER" id="PTHR45626">
    <property type="entry name" value="TRANSCRIPTION TERMINATION FACTOR 2-RELATED"/>
    <property type="match status" value="1"/>
</dbReference>
<dbReference type="Pfam" id="PF00646">
    <property type="entry name" value="F-box"/>
    <property type="match status" value="1"/>
</dbReference>
<dbReference type="Pfam" id="PF00271">
    <property type="entry name" value="Helicase_C"/>
    <property type="match status" value="1"/>
</dbReference>
<dbReference type="Pfam" id="PF00176">
    <property type="entry name" value="SNF2-rel_dom"/>
    <property type="match status" value="1"/>
</dbReference>
<dbReference type="Pfam" id="PF07496">
    <property type="entry name" value="zf-CW"/>
    <property type="match status" value="1"/>
</dbReference>
<dbReference type="SMART" id="SM00487">
    <property type="entry name" value="DEXDc"/>
    <property type="match status" value="1"/>
</dbReference>
<dbReference type="SMART" id="SM00256">
    <property type="entry name" value="FBOX"/>
    <property type="match status" value="1"/>
</dbReference>
<dbReference type="SMART" id="SM00490">
    <property type="entry name" value="HELICc"/>
    <property type="match status" value="1"/>
</dbReference>
<dbReference type="SUPFAM" id="SSF81383">
    <property type="entry name" value="F-box domain"/>
    <property type="match status" value="1"/>
</dbReference>
<dbReference type="SUPFAM" id="SSF52540">
    <property type="entry name" value="P-loop containing nucleoside triphosphate hydrolases"/>
    <property type="match status" value="3"/>
</dbReference>
<dbReference type="PROSITE" id="PS50181">
    <property type="entry name" value="FBOX"/>
    <property type="match status" value="1"/>
</dbReference>
<dbReference type="PROSITE" id="PS51192">
    <property type="entry name" value="HELICASE_ATP_BIND_1"/>
    <property type="match status" value="1"/>
</dbReference>
<dbReference type="PROSITE" id="PS51194">
    <property type="entry name" value="HELICASE_CTER"/>
    <property type="match status" value="1"/>
</dbReference>
<dbReference type="PROSITE" id="PS51050">
    <property type="entry name" value="ZF_CW"/>
    <property type="match status" value="1"/>
</dbReference>
<dbReference type="PROSITE" id="PS00518">
    <property type="entry name" value="ZF_RING_1"/>
    <property type="match status" value="1"/>
</dbReference>
<comment type="similarity">
    <text evidence="6">Belongs to the helicase family.</text>
</comment>
<protein>
    <recommendedName>
        <fullName>F-box protein At3g54460</fullName>
    </recommendedName>
</protein>
<accession>Q9M1I1</accession>
<accession>Q56XJ3</accession>